<accession>Q2GLI8</accession>
<sequence length="677" mass="74768">MSDNDSRRRLADLNAQLKLHDVLYHEHDAPEISDAQYDALVQEKRELLEKFPELSAYNDYEGVIGALTVDARLPKIAHREPMLSLENSFTIQDVEKFISRVKRSLNMDPEVSITIACEPKIDGLSFAALYEKGSLIRVATRGNGHLGEDITNTAKVIRKLPHKIANAPEVLEVRGEIYMHHSDFEKLKDVCNFANPRNAAAGSIRQLNPKIAEERNLRYVAYCIVNSALASQEAILKQLAEWGFCTHTEVLFADNMDDALSFHTRMYNTRSTLGYDIDGIVYKVNDTHLQKLLGSTSKYPRWATAHKFPSTEAITKLRDISVQVGRTGVITPIAELEPINIGGTLVSRASLHNLNEIARKDIRIGDSVIVKRAGEVIPQVVGVDHTARCNSAVPEEYVFPSHCPSCGSTLSRAPGEVAMRCTAELSCQAQVLERVKHFVSRDGLNIVGLGEKQIEFFCNASYISNVADIFSLREKISHMNLSAEHGWGEKSIALLINAINASTTVKLSNFIFALGIRFIGKGAAKLIAEHYRSYSAWVRAMTSLANGEDPDNIHGIGLKSIESLRAFFSSEDNLRVLQTLEEKLNILNEIANTETASPISGKTIVFTGVLEDMSRNEAAKYAETLGAKVGNTVTTKTDILVAGSNSGSKLDTARKLGIQVMNESEWKDLLKTVSNSE</sequence>
<protein>
    <recommendedName>
        <fullName evidence="1">DNA ligase</fullName>
        <ecNumber evidence="1">6.5.1.2</ecNumber>
    </recommendedName>
    <alternativeName>
        <fullName evidence="1">Polydeoxyribonucleotide synthase [NAD(+)]</fullName>
    </alternativeName>
</protein>
<keyword id="KW-0227">DNA damage</keyword>
<keyword id="KW-0234">DNA repair</keyword>
<keyword id="KW-0235">DNA replication</keyword>
<keyword id="KW-0436">Ligase</keyword>
<keyword id="KW-0460">Magnesium</keyword>
<keyword id="KW-0464">Manganese</keyword>
<keyword id="KW-0479">Metal-binding</keyword>
<keyword id="KW-0520">NAD</keyword>
<keyword id="KW-0862">Zinc</keyword>
<organism>
    <name type="scientific">Anaplasma phagocytophilum (strain HZ)</name>
    <dbReference type="NCBI Taxonomy" id="212042"/>
    <lineage>
        <taxon>Bacteria</taxon>
        <taxon>Pseudomonadati</taxon>
        <taxon>Pseudomonadota</taxon>
        <taxon>Alphaproteobacteria</taxon>
        <taxon>Rickettsiales</taxon>
        <taxon>Anaplasmataceae</taxon>
        <taxon>Anaplasma</taxon>
        <taxon>phagocytophilum group</taxon>
    </lineage>
</organism>
<feature type="chain" id="PRO_0000313114" description="DNA ligase">
    <location>
        <begin position="1"/>
        <end position="677"/>
    </location>
</feature>
<feature type="domain" description="BRCT" evidence="1">
    <location>
        <begin position="594"/>
        <end position="677"/>
    </location>
</feature>
<feature type="active site" description="N6-AMP-lysine intermediate" evidence="1">
    <location>
        <position position="120"/>
    </location>
</feature>
<feature type="binding site" evidence="1">
    <location>
        <begin position="34"/>
        <end position="38"/>
    </location>
    <ligand>
        <name>NAD(+)</name>
        <dbReference type="ChEBI" id="CHEBI:57540"/>
    </ligand>
</feature>
<feature type="binding site" evidence="1">
    <location>
        <begin position="84"/>
        <end position="85"/>
    </location>
    <ligand>
        <name>NAD(+)</name>
        <dbReference type="ChEBI" id="CHEBI:57540"/>
    </ligand>
</feature>
<feature type="binding site" evidence="1">
    <location>
        <position position="118"/>
    </location>
    <ligand>
        <name>NAD(+)</name>
        <dbReference type="ChEBI" id="CHEBI:57540"/>
    </ligand>
</feature>
<feature type="binding site" evidence="1">
    <location>
        <position position="141"/>
    </location>
    <ligand>
        <name>NAD(+)</name>
        <dbReference type="ChEBI" id="CHEBI:57540"/>
    </ligand>
</feature>
<feature type="binding site" evidence="1">
    <location>
        <position position="176"/>
    </location>
    <ligand>
        <name>NAD(+)</name>
        <dbReference type="ChEBI" id="CHEBI:57540"/>
    </ligand>
</feature>
<feature type="binding site" evidence="1">
    <location>
        <position position="283"/>
    </location>
    <ligand>
        <name>NAD(+)</name>
        <dbReference type="ChEBI" id="CHEBI:57540"/>
    </ligand>
</feature>
<feature type="binding site" evidence="1">
    <location>
        <position position="307"/>
    </location>
    <ligand>
        <name>NAD(+)</name>
        <dbReference type="ChEBI" id="CHEBI:57540"/>
    </ligand>
</feature>
<feature type="binding site" evidence="1">
    <location>
        <position position="403"/>
    </location>
    <ligand>
        <name>Zn(2+)</name>
        <dbReference type="ChEBI" id="CHEBI:29105"/>
    </ligand>
</feature>
<feature type="binding site" evidence="1">
    <location>
        <position position="406"/>
    </location>
    <ligand>
        <name>Zn(2+)</name>
        <dbReference type="ChEBI" id="CHEBI:29105"/>
    </ligand>
</feature>
<feature type="binding site" evidence="1">
    <location>
        <position position="421"/>
    </location>
    <ligand>
        <name>Zn(2+)</name>
        <dbReference type="ChEBI" id="CHEBI:29105"/>
    </ligand>
</feature>
<feature type="binding site" evidence="1">
    <location>
        <position position="427"/>
    </location>
    <ligand>
        <name>Zn(2+)</name>
        <dbReference type="ChEBI" id="CHEBI:29105"/>
    </ligand>
</feature>
<reference key="1">
    <citation type="journal article" date="2006" name="PLoS Genet.">
        <title>Comparative genomics of emerging human ehrlichiosis agents.</title>
        <authorList>
            <person name="Dunning Hotopp J.C."/>
            <person name="Lin M."/>
            <person name="Madupu R."/>
            <person name="Crabtree J."/>
            <person name="Angiuoli S.V."/>
            <person name="Eisen J.A."/>
            <person name="Seshadri R."/>
            <person name="Ren Q."/>
            <person name="Wu M."/>
            <person name="Utterback T.R."/>
            <person name="Smith S."/>
            <person name="Lewis M."/>
            <person name="Khouri H."/>
            <person name="Zhang C."/>
            <person name="Niu H."/>
            <person name="Lin Q."/>
            <person name="Ohashi N."/>
            <person name="Zhi N."/>
            <person name="Nelson W.C."/>
            <person name="Brinkac L.M."/>
            <person name="Dodson R.J."/>
            <person name="Rosovitz M.J."/>
            <person name="Sundaram J.P."/>
            <person name="Daugherty S.C."/>
            <person name="Davidsen T."/>
            <person name="Durkin A.S."/>
            <person name="Gwinn M.L."/>
            <person name="Haft D.H."/>
            <person name="Selengut J.D."/>
            <person name="Sullivan S.A."/>
            <person name="Zafar N."/>
            <person name="Zhou L."/>
            <person name="Benahmed F."/>
            <person name="Forberger H."/>
            <person name="Halpin R."/>
            <person name="Mulligan S."/>
            <person name="Robinson J."/>
            <person name="White O."/>
            <person name="Rikihisa Y."/>
            <person name="Tettelin H."/>
        </authorList>
    </citation>
    <scope>NUCLEOTIDE SEQUENCE [LARGE SCALE GENOMIC DNA]</scope>
    <source>
        <strain>HZ</strain>
    </source>
</reference>
<comment type="function">
    <text evidence="1">DNA ligase that catalyzes the formation of phosphodiester linkages between 5'-phosphoryl and 3'-hydroxyl groups in double-stranded DNA using NAD as a coenzyme and as the energy source for the reaction. It is essential for DNA replication and repair of damaged DNA.</text>
</comment>
<comment type="catalytic activity">
    <reaction evidence="1">
        <text>NAD(+) + (deoxyribonucleotide)n-3'-hydroxyl + 5'-phospho-(deoxyribonucleotide)m = (deoxyribonucleotide)n+m + AMP + beta-nicotinamide D-nucleotide.</text>
        <dbReference type="EC" id="6.5.1.2"/>
    </reaction>
</comment>
<comment type="cofactor">
    <cofactor evidence="1">
        <name>Mg(2+)</name>
        <dbReference type="ChEBI" id="CHEBI:18420"/>
    </cofactor>
    <cofactor evidence="1">
        <name>Mn(2+)</name>
        <dbReference type="ChEBI" id="CHEBI:29035"/>
    </cofactor>
</comment>
<comment type="similarity">
    <text evidence="1">Belongs to the NAD-dependent DNA ligase family. LigA subfamily.</text>
</comment>
<proteinExistence type="inferred from homology"/>
<evidence type="ECO:0000255" key="1">
    <source>
        <dbReference type="HAMAP-Rule" id="MF_01588"/>
    </source>
</evidence>
<name>DNLJ_ANAPZ</name>
<dbReference type="EC" id="6.5.1.2" evidence="1"/>
<dbReference type="EMBL" id="CP000235">
    <property type="protein sequence ID" value="ABD43878.1"/>
    <property type="molecule type" value="Genomic_DNA"/>
</dbReference>
<dbReference type="RefSeq" id="WP_011450289.1">
    <property type="nucleotide sequence ID" value="NC_007797.1"/>
</dbReference>
<dbReference type="SMR" id="Q2GLI8"/>
<dbReference type="STRING" id="212042.APH_0138"/>
<dbReference type="PaxDb" id="212042-APH_0138"/>
<dbReference type="EnsemblBacteria" id="ABD43878">
    <property type="protein sequence ID" value="ABD43878"/>
    <property type="gene ID" value="APH_0138"/>
</dbReference>
<dbReference type="GeneID" id="92747626"/>
<dbReference type="KEGG" id="aph:APH_0138"/>
<dbReference type="eggNOG" id="COG0272">
    <property type="taxonomic scope" value="Bacteria"/>
</dbReference>
<dbReference type="HOGENOM" id="CLU_007764_2_1_5"/>
<dbReference type="Proteomes" id="UP000001943">
    <property type="component" value="Chromosome"/>
</dbReference>
<dbReference type="GO" id="GO:0005829">
    <property type="term" value="C:cytosol"/>
    <property type="evidence" value="ECO:0007669"/>
    <property type="project" value="TreeGrafter"/>
</dbReference>
<dbReference type="GO" id="GO:0003911">
    <property type="term" value="F:DNA ligase (NAD+) activity"/>
    <property type="evidence" value="ECO:0007669"/>
    <property type="project" value="UniProtKB-UniRule"/>
</dbReference>
<dbReference type="GO" id="GO:0046872">
    <property type="term" value="F:metal ion binding"/>
    <property type="evidence" value="ECO:0007669"/>
    <property type="project" value="UniProtKB-KW"/>
</dbReference>
<dbReference type="GO" id="GO:0006281">
    <property type="term" value="P:DNA repair"/>
    <property type="evidence" value="ECO:0007669"/>
    <property type="project" value="UniProtKB-KW"/>
</dbReference>
<dbReference type="GO" id="GO:0006260">
    <property type="term" value="P:DNA replication"/>
    <property type="evidence" value="ECO:0007669"/>
    <property type="project" value="UniProtKB-KW"/>
</dbReference>
<dbReference type="CDD" id="cd17748">
    <property type="entry name" value="BRCT_DNA_ligase_like"/>
    <property type="match status" value="1"/>
</dbReference>
<dbReference type="CDD" id="cd00114">
    <property type="entry name" value="LIGANc"/>
    <property type="match status" value="1"/>
</dbReference>
<dbReference type="FunFam" id="2.40.50.140:FF:000012">
    <property type="entry name" value="DNA ligase"/>
    <property type="match status" value="1"/>
</dbReference>
<dbReference type="Gene3D" id="6.20.10.30">
    <property type="match status" value="1"/>
</dbReference>
<dbReference type="Gene3D" id="1.10.150.20">
    <property type="entry name" value="5' to 3' exonuclease, C-terminal subdomain"/>
    <property type="match status" value="2"/>
</dbReference>
<dbReference type="Gene3D" id="3.40.50.10190">
    <property type="entry name" value="BRCT domain"/>
    <property type="match status" value="1"/>
</dbReference>
<dbReference type="Gene3D" id="3.30.470.30">
    <property type="entry name" value="DNA ligase/mRNA capping enzyme"/>
    <property type="match status" value="1"/>
</dbReference>
<dbReference type="Gene3D" id="1.10.287.610">
    <property type="entry name" value="Helix hairpin bin"/>
    <property type="match status" value="1"/>
</dbReference>
<dbReference type="Gene3D" id="2.40.50.140">
    <property type="entry name" value="Nucleic acid-binding proteins"/>
    <property type="match status" value="1"/>
</dbReference>
<dbReference type="HAMAP" id="MF_01588">
    <property type="entry name" value="DNA_ligase_A"/>
    <property type="match status" value="1"/>
</dbReference>
<dbReference type="InterPro" id="IPR001357">
    <property type="entry name" value="BRCT_dom"/>
</dbReference>
<dbReference type="InterPro" id="IPR036420">
    <property type="entry name" value="BRCT_dom_sf"/>
</dbReference>
<dbReference type="InterPro" id="IPR041663">
    <property type="entry name" value="DisA/LigA_HHH"/>
</dbReference>
<dbReference type="InterPro" id="IPR001679">
    <property type="entry name" value="DNA_ligase"/>
</dbReference>
<dbReference type="InterPro" id="IPR018239">
    <property type="entry name" value="DNA_ligase_AS"/>
</dbReference>
<dbReference type="InterPro" id="IPR013839">
    <property type="entry name" value="DNAligase_adenylation"/>
</dbReference>
<dbReference type="InterPro" id="IPR013840">
    <property type="entry name" value="DNAligase_N"/>
</dbReference>
<dbReference type="InterPro" id="IPR012340">
    <property type="entry name" value="NA-bd_OB-fold"/>
</dbReference>
<dbReference type="InterPro" id="IPR004150">
    <property type="entry name" value="NAD_DNA_ligase_OB"/>
</dbReference>
<dbReference type="InterPro" id="IPR010994">
    <property type="entry name" value="RuvA_2-like"/>
</dbReference>
<dbReference type="InterPro" id="IPR004149">
    <property type="entry name" value="Znf_DNAligase_C4"/>
</dbReference>
<dbReference type="NCBIfam" id="TIGR00575">
    <property type="entry name" value="dnlj"/>
    <property type="match status" value="1"/>
</dbReference>
<dbReference type="NCBIfam" id="NF005932">
    <property type="entry name" value="PRK07956.1"/>
    <property type="match status" value="1"/>
</dbReference>
<dbReference type="PANTHER" id="PTHR23389">
    <property type="entry name" value="CHROMOSOME TRANSMISSION FIDELITY FACTOR 18"/>
    <property type="match status" value="1"/>
</dbReference>
<dbReference type="PANTHER" id="PTHR23389:SF9">
    <property type="entry name" value="DNA LIGASE"/>
    <property type="match status" value="1"/>
</dbReference>
<dbReference type="Pfam" id="PF00533">
    <property type="entry name" value="BRCT"/>
    <property type="match status" value="1"/>
</dbReference>
<dbReference type="Pfam" id="PF01653">
    <property type="entry name" value="DNA_ligase_aden"/>
    <property type="match status" value="1"/>
</dbReference>
<dbReference type="Pfam" id="PF03120">
    <property type="entry name" value="DNA_ligase_OB"/>
    <property type="match status" value="1"/>
</dbReference>
<dbReference type="Pfam" id="PF03119">
    <property type="entry name" value="DNA_ligase_ZBD"/>
    <property type="match status" value="1"/>
</dbReference>
<dbReference type="Pfam" id="PF12826">
    <property type="entry name" value="HHH_2"/>
    <property type="match status" value="1"/>
</dbReference>
<dbReference type="Pfam" id="PF22745">
    <property type="entry name" value="Nlig-Ia"/>
    <property type="match status" value="1"/>
</dbReference>
<dbReference type="PIRSF" id="PIRSF001604">
    <property type="entry name" value="LigA"/>
    <property type="match status" value="1"/>
</dbReference>
<dbReference type="SMART" id="SM00292">
    <property type="entry name" value="BRCT"/>
    <property type="match status" value="1"/>
</dbReference>
<dbReference type="SMART" id="SM00532">
    <property type="entry name" value="LIGANc"/>
    <property type="match status" value="1"/>
</dbReference>
<dbReference type="SUPFAM" id="SSF52113">
    <property type="entry name" value="BRCT domain"/>
    <property type="match status" value="1"/>
</dbReference>
<dbReference type="SUPFAM" id="SSF56091">
    <property type="entry name" value="DNA ligase/mRNA capping enzyme, catalytic domain"/>
    <property type="match status" value="1"/>
</dbReference>
<dbReference type="SUPFAM" id="SSF50249">
    <property type="entry name" value="Nucleic acid-binding proteins"/>
    <property type="match status" value="1"/>
</dbReference>
<dbReference type="SUPFAM" id="SSF47781">
    <property type="entry name" value="RuvA domain 2-like"/>
    <property type="match status" value="1"/>
</dbReference>
<dbReference type="PROSITE" id="PS50172">
    <property type="entry name" value="BRCT"/>
    <property type="match status" value="1"/>
</dbReference>
<dbReference type="PROSITE" id="PS01055">
    <property type="entry name" value="DNA_LIGASE_N1"/>
    <property type="match status" value="1"/>
</dbReference>
<gene>
    <name evidence="1" type="primary">ligA</name>
    <name type="ordered locus">APH_0138</name>
</gene>